<sequence>MELPDIPFPITSPDDFYDDPCFNTSDMHFFEDLDPRLVHVGLLKPDDHHHKEDEHIRAPSGHHQAGRCLLWACKACKRKTTNADRRKAATMRERRRLSKVNDAFETLKRCTSTNPNQRLPKVDILRNAISYIESLQGLLRGAGQEGNYYPVMDHYSGDSDASSPRSNCSDGMMDFNGQSCPPRRRNKYDSTYFNEAPNDSRHKKNSVISSLDCLSNIVERITTDTSACPAVQDGSEGSSPCSPGDGSIASENGAPIPSPINCVPALHDPNTIYQVL</sequence>
<comment type="function">
    <text evidence="1">May act as a transcriptional activator that promotes transcription of muscle-specific target genes and plays a role in muscle differentiation.</text>
</comment>
<comment type="subunit">
    <text>Efficient DNA binding requires dimerization with another bHLH protein.</text>
</comment>
<comment type="subcellular location">
    <subcellularLocation>
        <location>Nucleus</location>
    </subcellularLocation>
</comment>
<feature type="chain" id="PRO_0000127368" description="Myoblast determination protein 1 homolog 1">
    <location>
        <begin position="1"/>
        <end position="276"/>
    </location>
</feature>
<feature type="domain" description="bHLH" evidence="2">
    <location>
        <begin position="84"/>
        <end position="135"/>
    </location>
</feature>
<feature type="region of interest" description="Disordered" evidence="3">
    <location>
        <begin position="228"/>
        <end position="253"/>
    </location>
</feature>
<proteinExistence type="evidence at transcript level"/>
<evidence type="ECO:0000250" key="1"/>
<evidence type="ECO:0000255" key="2">
    <source>
        <dbReference type="PROSITE-ProRule" id="PRU00981"/>
    </source>
</evidence>
<evidence type="ECO:0000256" key="3">
    <source>
        <dbReference type="SAM" id="MobiDB-lite"/>
    </source>
</evidence>
<gene>
    <name type="primary">myod1</name>
    <name type="synonym">myod</name>
</gene>
<keyword id="KW-0010">Activator</keyword>
<keyword id="KW-0217">Developmental protein</keyword>
<keyword id="KW-0221">Differentiation</keyword>
<keyword id="KW-0238">DNA-binding</keyword>
<keyword id="KW-0517">Myogenesis</keyword>
<keyword id="KW-0539">Nucleus</keyword>
<keyword id="KW-0804">Transcription</keyword>
<keyword id="KW-0805">Transcription regulation</keyword>
<protein>
    <recommendedName>
        <fullName>Myoblast determination protein 1 homolog 1</fullName>
    </recommendedName>
    <alternativeName>
        <fullName>Myogenic factor 1-1</fullName>
    </alternativeName>
</protein>
<organism>
    <name type="scientific">Oncorhynchus mykiss</name>
    <name type="common">Rainbow trout</name>
    <name type="synonym">Salmo gairdneri</name>
    <dbReference type="NCBI Taxonomy" id="8022"/>
    <lineage>
        <taxon>Eukaryota</taxon>
        <taxon>Metazoa</taxon>
        <taxon>Chordata</taxon>
        <taxon>Craniata</taxon>
        <taxon>Vertebrata</taxon>
        <taxon>Euteleostomi</taxon>
        <taxon>Actinopterygii</taxon>
        <taxon>Neopterygii</taxon>
        <taxon>Teleostei</taxon>
        <taxon>Protacanthopterygii</taxon>
        <taxon>Salmoniformes</taxon>
        <taxon>Salmonidae</taxon>
        <taxon>Salmoninae</taxon>
        <taxon>Oncorhynchus</taxon>
    </lineage>
</organism>
<dbReference type="EMBL" id="X75798">
    <property type="protein sequence ID" value="CAA53436.1"/>
    <property type="molecule type" value="mRNA"/>
</dbReference>
<dbReference type="PIR" id="S45362">
    <property type="entry name" value="S38629"/>
</dbReference>
<dbReference type="RefSeq" id="NP_001118192.1">
    <property type="nucleotide sequence ID" value="NM_001124720.1"/>
</dbReference>
<dbReference type="SMR" id="Q91205"/>
<dbReference type="Ensembl" id="ENSOMYT00000068817.2">
    <property type="protein sequence ID" value="ENSOMYP00000063209.2"/>
    <property type="gene ID" value="ENSOMYG00000029242.2"/>
</dbReference>
<dbReference type="Ensembl" id="ENSOMYT00000068826.2">
    <property type="protein sequence ID" value="ENSOMYP00000063218.2"/>
    <property type="gene ID" value="ENSOMYG00000061213.1"/>
</dbReference>
<dbReference type="GeneID" id="100136773"/>
<dbReference type="KEGG" id="omy:100136773"/>
<dbReference type="CTD" id="778924"/>
<dbReference type="GeneTree" id="ENSGT00950000182959"/>
<dbReference type="OrthoDB" id="10049614at2759"/>
<dbReference type="Proteomes" id="UP000694395">
    <property type="component" value="Chromosome 26"/>
</dbReference>
<dbReference type="Proteomes" id="UP000694395">
    <property type="component" value="Chromosome 6"/>
</dbReference>
<dbReference type="GO" id="GO:0005634">
    <property type="term" value="C:nucleus"/>
    <property type="evidence" value="ECO:0007669"/>
    <property type="project" value="UniProtKB-SubCell"/>
</dbReference>
<dbReference type="GO" id="GO:0001216">
    <property type="term" value="F:DNA-binding transcription activator activity"/>
    <property type="evidence" value="ECO:0000250"/>
    <property type="project" value="UniProtKB"/>
</dbReference>
<dbReference type="GO" id="GO:0000981">
    <property type="term" value="F:DNA-binding transcription factor activity, RNA polymerase II-specific"/>
    <property type="evidence" value="ECO:0007669"/>
    <property type="project" value="TreeGrafter"/>
</dbReference>
<dbReference type="GO" id="GO:0070888">
    <property type="term" value="F:E-box binding"/>
    <property type="evidence" value="ECO:0000250"/>
    <property type="project" value="UniProtKB"/>
</dbReference>
<dbReference type="GO" id="GO:1990841">
    <property type="term" value="F:promoter-specific chromatin binding"/>
    <property type="evidence" value="ECO:0000250"/>
    <property type="project" value="UniProtKB"/>
</dbReference>
<dbReference type="GO" id="GO:0046983">
    <property type="term" value="F:protein dimerization activity"/>
    <property type="evidence" value="ECO:0007669"/>
    <property type="project" value="InterPro"/>
</dbReference>
<dbReference type="GO" id="GO:0071392">
    <property type="term" value="P:cellular response to estradiol stimulus"/>
    <property type="evidence" value="ECO:0000250"/>
    <property type="project" value="UniProtKB"/>
</dbReference>
<dbReference type="GO" id="GO:0045663">
    <property type="term" value="P:positive regulation of myoblast differentiation"/>
    <property type="evidence" value="ECO:0007669"/>
    <property type="project" value="TreeGrafter"/>
</dbReference>
<dbReference type="GO" id="GO:0048743">
    <property type="term" value="P:positive regulation of skeletal muscle fiber development"/>
    <property type="evidence" value="ECO:0007669"/>
    <property type="project" value="TreeGrafter"/>
</dbReference>
<dbReference type="GO" id="GO:1905382">
    <property type="term" value="P:positive regulation of snRNA transcription by RNA polymerase II"/>
    <property type="evidence" value="ECO:0000250"/>
    <property type="project" value="UniProtKB"/>
</dbReference>
<dbReference type="GO" id="GO:0045944">
    <property type="term" value="P:positive regulation of transcription by RNA polymerase II"/>
    <property type="evidence" value="ECO:0000250"/>
    <property type="project" value="UniProtKB"/>
</dbReference>
<dbReference type="GO" id="GO:0035914">
    <property type="term" value="P:skeletal muscle cell differentiation"/>
    <property type="evidence" value="ECO:0007669"/>
    <property type="project" value="TreeGrafter"/>
</dbReference>
<dbReference type="CDD" id="cd18936">
    <property type="entry name" value="bHLH_TS_MYOD1_Myf3"/>
    <property type="match status" value="1"/>
</dbReference>
<dbReference type="FunFam" id="4.10.280.10:FF:000005">
    <property type="entry name" value="Myogenic factor"/>
    <property type="match status" value="1"/>
</dbReference>
<dbReference type="Gene3D" id="4.10.280.10">
    <property type="entry name" value="Helix-loop-helix DNA-binding domain"/>
    <property type="match status" value="1"/>
</dbReference>
<dbReference type="InterPro" id="IPR011598">
    <property type="entry name" value="bHLH_dom"/>
</dbReference>
<dbReference type="InterPro" id="IPR036638">
    <property type="entry name" value="HLH_DNA-bd_sf"/>
</dbReference>
<dbReference type="InterPro" id="IPR022032">
    <property type="entry name" value="Myf5"/>
</dbReference>
<dbReference type="InterPro" id="IPR002546">
    <property type="entry name" value="MyoD_N"/>
</dbReference>
<dbReference type="InterPro" id="IPR039704">
    <property type="entry name" value="Myogenic_factor"/>
</dbReference>
<dbReference type="PANTHER" id="PTHR11534:SF2">
    <property type="entry name" value="MYOBLAST DETERMINATION PROTEIN 1"/>
    <property type="match status" value="1"/>
</dbReference>
<dbReference type="PANTHER" id="PTHR11534">
    <property type="entry name" value="MYOGENIC FACTOR"/>
    <property type="match status" value="1"/>
</dbReference>
<dbReference type="Pfam" id="PF01586">
    <property type="entry name" value="Basic"/>
    <property type="match status" value="1"/>
</dbReference>
<dbReference type="Pfam" id="PF00010">
    <property type="entry name" value="HLH"/>
    <property type="match status" value="1"/>
</dbReference>
<dbReference type="Pfam" id="PF12232">
    <property type="entry name" value="Myf5"/>
    <property type="match status" value="1"/>
</dbReference>
<dbReference type="SMART" id="SM00520">
    <property type="entry name" value="BASIC"/>
    <property type="match status" value="1"/>
</dbReference>
<dbReference type="SMART" id="SM00353">
    <property type="entry name" value="HLH"/>
    <property type="match status" value="1"/>
</dbReference>
<dbReference type="SUPFAM" id="SSF47459">
    <property type="entry name" value="HLH, helix-loop-helix DNA-binding domain"/>
    <property type="match status" value="1"/>
</dbReference>
<dbReference type="PROSITE" id="PS50888">
    <property type="entry name" value="BHLH"/>
    <property type="match status" value="1"/>
</dbReference>
<reference key="1">
    <citation type="journal article" date="1994" name="Biochim. Biophys. Acta">
        <title>Identification of a muscle factor related to MyoD in a fish species.</title>
        <authorList>
            <person name="Rescan P.Y."/>
            <person name="Gauvry L."/>
            <person name="Paboeuf G."/>
            <person name="Fauconneau B."/>
        </authorList>
    </citation>
    <scope>NUCLEOTIDE SEQUENCE [MRNA]</scope>
    <source>
        <tissue>Muscle</tissue>
    </source>
</reference>
<accession>Q91205</accession>
<name>MYOD1_ONCMY</name>